<accession>H2E7T5</accession>
<reference key="1">
    <citation type="journal article" date="2012" name="J. Biol. Chem.">
        <title>Functional identification of triterpene methyltransferases from Botryococcus braunii race B.</title>
        <authorList>
            <person name="Niehaus T.D."/>
            <person name="Kinison S."/>
            <person name="Okada S."/>
            <person name="Yeo Y.S."/>
            <person name="Bell S.A."/>
            <person name="Cui P."/>
            <person name="Devarenne T.P."/>
            <person name="Chappell J."/>
        </authorList>
    </citation>
    <scope>NUCLEOTIDE SEQUENCE [MRNA]</scope>
    <scope>FUNCTION</scope>
    <scope>CATALYTIC ACTIVITY</scope>
    <scope>BIOPHYSICOCHEMICAL PROPERTIES</scope>
</reference>
<keyword id="KW-0256">Endoplasmic reticulum</keyword>
<keyword id="KW-0444">Lipid biosynthesis</keyword>
<keyword id="KW-0443">Lipid metabolism</keyword>
<keyword id="KW-0472">Membrane</keyword>
<keyword id="KW-0489">Methyltransferase</keyword>
<keyword id="KW-0492">Microsome</keyword>
<keyword id="KW-0949">S-adenosyl-L-methionine</keyword>
<keyword id="KW-0808">Transferase</keyword>
<keyword id="KW-0812">Transmembrane</keyword>
<keyword id="KW-1133">Transmembrane helix</keyword>
<sequence length="378" mass="41728">MGLDLLSTYAPGIFDSLLTWKGVAGLVVAITLGYLIISRLPGQKSRPKLLDLKTGGISFEKVAAVYDDYDKSYGEGDHGELHVKDKNKVFQLANTFYDFVTDGYEWAWGSSFHFSQRMPGLSHAASQMLHESRMASFLRLKPGMKCLDVGCGVGNPGRTVASCSGAEVTGITINEYQIKRAEYHNKRTGLVGYFKPVVGNFCAMPFKDKTFDAAFAMDSTCHAPKLEDVYSEVFRVLKPGGLFATYEWVSTKDYDPNNSRHVKVMNSIIFGNGLPNIRSWKQAEDAGKNVGFKLVTSFDLATAPPVGKPWYYVPELMVKYGLLTIQKALVRGACNVGLLPNEGWKVCNMVADMVPNLVEGGATNIFTPMHLLIFEKPK</sequence>
<gene>
    <name type="primary">TMT-1</name>
</gene>
<proteinExistence type="evidence at protein level"/>
<dbReference type="EC" id="2.1.1.262"/>
<dbReference type="EMBL" id="JN828962">
    <property type="protein sequence ID" value="AEY68256.1"/>
    <property type="molecule type" value="mRNA"/>
</dbReference>
<dbReference type="SMR" id="H2E7T5"/>
<dbReference type="KEGG" id="ag:AEY68256"/>
<dbReference type="BioCyc" id="MetaCyc:MONOMER-17324"/>
<dbReference type="SABIO-RK" id="H2E7T5"/>
<dbReference type="GO" id="GO:0005783">
    <property type="term" value="C:endoplasmic reticulum"/>
    <property type="evidence" value="ECO:0007669"/>
    <property type="project" value="UniProtKB-KW"/>
</dbReference>
<dbReference type="GO" id="GO:0016020">
    <property type="term" value="C:membrane"/>
    <property type="evidence" value="ECO:0007669"/>
    <property type="project" value="UniProtKB-KW"/>
</dbReference>
<dbReference type="GO" id="GO:0008757">
    <property type="term" value="F:S-adenosylmethionine-dependent methyltransferase activity"/>
    <property type="evidence" value="ECO:0007669"/>
    <property type="project" value="InterPro"/>
</dbReference>
<dbReference type="GO" id="GO:0032259">
    <property type="term" value="P:methylation"/>
    <property type="evidence" value="ECO:0007669"/>
    <property type="project" value="UniProtKB-KW"/>
</dbReference>
<dbReference type="GO" id="GO:0006694">
    <property type="term" value="P:steroid biosynthetic process"/>
    <property type="evidence" value="ECO:0007669"/>
    <property type="project" value="InterPro"/>
</dbReference>
<dbReference type="CDD" id="cd02440">
    <property type="entry name" value="AdoMet_MTases"/>
    <property type="match status" value="1"/>
</dbReference>
<dbReference type="Gene3D" id="3.40.50.150">
    <property type="entry name" value="Vaccinia Virus protein VP39"/>
    <property type="match status" value="1"/>
</dbReference>
<dbReference type="InterPro" id="IPR013216">
    <property type="entry name" value="Methyltransf_11"/>
</dbReference>
<dbReference type="InterPro" id="IPR030384">
    <property type="entry name" value="MeTrfase_SMT"/>
</dbReference>
<dbReference type="InterPro" id="IPR029063">
    <property type="entry name" value="SAM-dependent_MTases_sf"/>
</dbReference>
<dbReference type="InterPro" id="IPR013705">
    <property type="entry name" value="Sterol_MeTrfase_C"/>
</dbReference>
<dbReference type="PANTHER" id="PTHR44742">
    <property type="match status" value="1"/>
</dbReference>
<dbReference type="PANTHER" id="PTHR44742:SF2">
    <property type="entry name" value="24-METHYLENESTEROL C-METHYLTRANSFERASE 2"/>
    <property type="match status" value="1"/>
</dbReference>
<dbReference type="Pfam" id="PF08241">
    <property type="entry name" value="Methyltransf_11"/>
    <property type="match status" value="1"/>
</dbReference>
<dbReference type="Pfam" id="PF08498">
    <property type="entry name" value="Sterol_MT_C"/>
    <property type="match status" value="1"/>
</dbReference>
<dbReference type="SUPFAM" id="SSF53335">
    <property type="entry name" value="S-adenosyl-L-methionine-dependent methyltransferases"/>
    <property type="match status" value="1"/>
</dbReference>
<dbReference type="PROSITE" id="PS51685">
    <property type="entry name" value="SAM_MT_ERG6_SMT"/>
    <property type="match status" value="1"/>
</dbReference>
<protein>
    <recommendedName>
        <fullName>Squalene methyltransferase 1</fullName>
        <ecNumber>2.1.1.262</ecNumber>
    </recommendedName>
    <alternativeName>
        <fullName>Triterpene methyltransferase 1</fullName>
    </alternativeName>
</protein>
<feature type="chain" id="PRO_0000421355" description="Squalene methyltransferase 1">
    <location>
        <begin position="1"/>
        <end position="378"/>
    </location>
</feature>
<feature type="transmembrane region" description="Helical" evidence="1">
    <location>
        <begin position="17"/>
        <end position="37"/>
    </location>
</feature>
<organism>
    <name type="scientific">Botryococcus braunii</name>
    <name type="common">Green alga</name>
    <dbReference type="NCBI Taxonomy" id="38881"/>
    <lineage>
        <taxon>Eukaryota</taxon>
        <taxon>Viridiplantae</taxon>
        <taxon>Chlorophyta</taxon>
        <taxon>core chlorophytes</taxon>
        <taxon>Trebouxiophyceae</taxon>
        <taxon>Trebouxiophyceae incertae sedis</taxon>
        <taxon>Elliptochloris clade</taxon>
        <taxon>Botryococcus</taxon>
    </lineage>
</organism>
<evidence type="ECO:0000255" key="1"/>
<evidence type="ECO:0000255" key="2">
    <source>
        <dbReference type="PROSITE-ProRule" id="PRU01022"/>
    </source>
</evidence>
<evidence type="ECO:0000269" key="3">
    <source>
    </source>
</evidence>
<evidence type="ECO:0000305" key="4"/>
<comment type="function">
    <text evidence="3">Converts squalene to mono- and dimethyl derivatives, but not to tri- and tetramethylated products. Unable to methylate cycloartenol, zymosterol or lanosterol. Methylates both C-3 and C22 positions, but only C-3 position in monomethylated products. Produces mainly dimethylated squalene.</text>
</comment>
<comment type="catalytic activity">
    <reaction evidence="3">
        <text>squalene + 2 S-adenosyl-L-methionine = 3,22-dimethyl-1,2,23,24-tetradehydro-2,3,22,23-tetrahydrosqualene + 2 S-adenosyl-L-homocysteine + 2 H(+)</text>
        <dbReference type="Rhea" id="RHEA:34643"/>
        <dbReference type="ChEBI" id="CHEBI:15378"/>
        <dbReference type="ChEBI" id="CHEBI:15440"/>
        <dbReference type="ChEBI" id="CHEBI:57856"/>
        <dbReference type="ChEBI" id="CHEBI:59789"/>
        <dbReference type="ChEBI" id="CHEBI:70861"/>
        <dbReference type="EC" id="2.1.1.262"/>
    </reaction>
</comment>
<comment type="biophysicochemical properties">
    <kinetics>
        <KM evidence="3">33.1 uM for squalene</KM>
    </kinetics>
</comment>
<comment type="subcellular location">
    <subcellularLocation>
        <location evidence="4">Microsome membrane</location>
        <topology evidence="4">Single-pass membrane protein</topology>
    </subcellularLocation>
</comment>
<comment type="similarity">
    <text evidence="2">Belongs to the class I-like SAM-binding methyltransferase superfamily. Erg6/SMT family.</text>
</comment>
<name>SQMT1_BOTBR</name>